<reference key="1">
    <citation type="journal article" date="2004" name="Proc. Natl. Acad. Sci. U.S.A.">
        <title>Complete genomes of two clinical Staphylococcus aureus strains: evidence for the rapid evolution of virulence and drug resistance.</title>
        <authorList>
            <person name="Holden M.T.G."/>
            <person name="Feil E.J."/>
            <person name="Lindsay J.A."/>
            <person name="Peacock S.J."/>
            <person name="Day N.P.J."/>
            <person name="Enright M.C."/>
            <person name="Foster T.J."/>
            <person name="Moore C.E."/>
            <person name="Hurst L."/>
            <person name="Atkin R."/>
            <person name="Barron A."/>
            <person name="Bason N."/>
            <person name="Bentley S.D."/>
            <person name="Chillingworth C."/>
            <person name="Chillingworth T."/>
            <person name="Churcher C."/>
            <person name="Clark L."/>
            <person name="Corton C."/>
            <person name="Cronin A."/>
            <person name="Doggett J."/>
            <person name="Dowd L."/>
            <person name="Feltwell T."/>
            <person name="Hance Z."/>
            <person name="Harris B."/>
            <person name="Hauser H."/>
            <person name="Holroyd S."/>
            <person name="Jagels K."/>
            <person name="James K.D."/>
            <person name="Lennard N."/>
            <person name="Line A."/>
            <person name="Mayes R."/>
            <person name="Moule S."/>
            <person name="Mungall K."/>
            <person name="Ormond D."/>
            <person name="Quail M.A."/>
            <person name="Rabbinowitsch E."/>
            <person name="Rutherford K.M."/>
            <person name="Sanders M."/>
            <person name="Sharp S."/>
            <person name="Simmonds M."/>
            <person name="Stevens K."/>
            <person name="Whitehead S."/>
            <person name="Barrell B.G."/>
            <person name="Spratt B.G."/>
            <person name="Parkhill J."/>
        </authorList>
    </citation>
    <scope>NUCLEOTIDE SEQUENCE [LARGE SCALE GENOMIC DNA]</scope>
    <source>
        <strain>MRSA252</strain>
    </source>
</reference>
<gene>
    <name type="primary">alr1</name>
    <name type="ordered locus">SAR2158</name>
</gene>
<proteinExistence type="inferred from homology"/>
<protein>
    <recommendedName>
        <fullName evidence="1">Alanine racemase 1</fullName>
        <ecNumber evidence="1">5.1.1.1</ecNumber>
    </recommendedName>
</protein>
<sequence>MSDKYYRSAYMNVDLNAVASNFKVFSTLHPNKTVMAVVKANAYGLGSVKVARHLMENGATFFAVATLDEAIELRMHGITAKILVLGVLPAKDIDKAIQHRVALTVPSKQWLKEAIKNISGEQEKKLWLHIKLDTGMGRLGIKDTKTYQEVIEIIQQYEQLVFEGVFTHFACADEPGDMTTEQYHRFKDMVNEAIKPEYIHCQNSAGSLLMDCQFCNAIRPGISLYGYYPSEYVQQKVKVHLKPSVQLIANVVQTKTLQAGESVSYGATYTATDPTTIALLPIGYADGYLRIMQGSFVNVNGHQCEVIGRVCMDQTIVKVPDQVKAGDSVILIDNHRESPQSVEVAAEKQHTINYEVLCNLSRRLPRIYHDGDQRFVTNELLK</sequence>
<name>ALR1_STAAR</name>
<comment type="function">
    <text evidence="1">Catalyzes the interconversion of L-alanine and D-alanine. May also act on other amino acids.</text>
</comment>
<comment type="catalytic activity">
    <reaction evidence="1">
        <text>L-alanine = D-alanine</text>
        <dbReference type="Rhea" id="RHEA:20249"/>
        <dbReference type="ChEBI" id="CHEBI:57416"/>
        <dbReference type="ChEBI" id="CHEBI:57972"/>
        <dbReference type="EC" id="5.1.1.1"/>
    </reaction>
</comment>
<comment type="cofactor">
    <cofactor evidence="1">
        <name>pyridoxal 5'-phosphate</name>
        <dbReference type="ChEBI" id="CHEBI:597326"/>
    </cofactor>
</comment>
<comment type="pathway">
    <text evidence="1">Amino-acid biosynthesis; D-alanine biosynthesis; D-alanine from L-alanine: step 1/1.</text>
</comment>
<comment type="similarity">
    <text evidence="1">Belongs to the alanine racemase family.</text>
</comment>
<organism>
    <name type="scientific">Staphylococcus aureus (strain MRSA252)</name>
    <dbReference type="NCBI Taxonomy" id="282458"/>
    <lineage>
        <taxon>Bacteria</taxon>
        <taxon>Bacillati</taxon>
        <taxon>Bacillota</taxon>
        <taxon>Bacilli</taxon>
        <taxon>Bacillales</taxon>
        <taxon>Staphylococcaceae</taxon>
        <taxon>Staphylococcus</taxon>
    </lineage>
</organism>
<dbReference type="EC" id="5.1.1.1" evidence="1"/>
<dbReference type="EMBL" id="BX571856">
    <property type="protein sequence ID" value="CAG41139.1"/>
    <property type="molecule type" value="Genomic_DNA"/>
</dbReference>
<dbReference type="SMR" id="Q6GF03"/>
<dbReference type="KEGG" id="sar:SAR2158"/>
<dbReference type="HOGENOM" id="CLU_028393_2_1_9"/>
<dbReference type="UniPathway" id="UPA00042">
    <property type="reaction ID" value="UER00497"/>
</dbReference>
<dbReference type="Proteomes" id="UP000000596">
    <property type="component" value="Chromosome"/>
</dbReference>
<dbReference type="GO" id="GO:0005829">
    <property type="term" value="C:cytosol"/>
    <property type="evidence" value="ECO:0007669"/>
    <property type="project" value="TreeGrafter"/>
</dbReference>
<dbReference type="GO" id="GO:0008784">
    <property type="term" value="F:alanine racemase activity"/>
    <property type="evidence" value="ECO:0007669"/>
    <property type="project" value="UniProtKB-UniRule"/>
</dbReference>
<dbReference type="GO" id="GO:0030170">
    <property type="term" value="F:pyridoxal phosphate binding"/>
    <property type="evidence" value="ECO:0007669"/>
    <property type="project" value="UniProtKB-UniRule"/>
</dbReference>
<dbReference type="GO" id="GO:0030632">
    <property type="term" value="P:D-alanine biosynthetic process"/>
    <property type="evidence" value="ECO:0007669"/>
    <property type="project" value="UniProtKB-UniRule"/>
</dbReference>
<dbReference type="GO" id="GO:0009252">
    <property type="term" value="P:peptidoglycan biosynthetic process"/>
    <property type="evidence" value="ECO:0007669"/>
    <property type="project" value="TreeGrafter"/>
</dbReference>
<dbReference type="CDD" id="cd00430">
    <property type="entry name" value="PLPDE_III_AR"/>
    <property type="match status" value="1"/>
</dbReference>
<dbReference type="FunFam" id="2.40.37.10:FF:000006">
    <property type="entry name" value="Alanine racemase"/>
    <property type="match status" value="1"/>
</dbReference>
<dbReference type="FunFam" id="3.20.20.10:FF:000002">
    <property type="entry name" value="Alanine racemase"/>
    <property type="match status" value="1"/>
</dbReference>
<dbReference type="Gene3D" id="3.20.20.10">
    <property type="entry name" value="Alanine racemase"/>
    <property type="match status" value="1"/>
</dbReference>
<dbReference type="Gene3D" id="2.40.37.10">
    <property type="entry name" value="Lyase, Ornithine Decarboxylase, Chain A, domain 1"/>
    <property type="match status" value="1"/>
</dbReference>
<dbReference type="HAMAP" id="MF_01201">
    <property type="entry name" value="Ala_racemase"/>
    <property type="match status" value="1"/>
</dbReference>
<dbReference type="InterPro" id="IPR000821">
    <property type="entry name" value="Ala_racemase"/>
</dbReference>
<dbReference type="InterPro" id="IPR009006">
    <property type="entry name" value="Ala_racemase/Decarboxylase_C"/>
</dbReference>
<dbReference type="InterPro" id="IPR011079">
    <property type="entry name" value="Ala_racemase_C"/>
</dbReference>
<dbReference type="InterPro" id="IPR001608">
    <property type="entry name" value="Ala_racemase_N"/>
</dbReference>
<dbReference type="InterPro" id="IPR020622">
    <property type="entry name" value="Ala_racemase_pyridoxalP-BS"/>
</dbReference>
<dbReference type="InterPro" id="IPR029066">
    <property type="entry name" value="PLP-binding_barrel"/>
</dbReference>
<dbReference type="NCBIfam" id="TIGR00492">
    <property type="entry name" value="alr"/>
    <property type="match status" value="1"/>
</dbReference>
<dbReference type="PANTHER" id="PTHR30511">
    <property type="entry name" value="ALANINE RACEMASE"/>
    <property type="match status" value="1"/>
</dbReference>
<dbReference type="PANTHER" id="PTHR30511:SF0">
    <property type="entry name" value="ALANINE RACEMASE, CATABOLIC-RELATED"/>
    <property type="match status" value="1"/>
</dbReference>
<dbReference type="Pfam" id="PF00842">
    <property type="entry name" value="Ala_racemase_C"/>
    <property type="match status" value="1"/>
</dbReference>
<dbReference type="Pfam" id="PF01168">
    <property type="entry name" value="Ala_racemase_N"/>
    <property type="match status" value="1"/>
</dbReference>
<dbReference type="PRINTS" id="PR00992">
    <property type="entry name" value="ALARACEMASE"/>
</dbReference>
<dbReference type="SMART" id="SM01005">
    <property type="entry name" value="Ala_racemase_C"/>
    <property type="match status" value="1"/>
</dbReference>
<dbReference type="SUPFAM" id="SSF50621">
    <property type="entry name" value="Alanine racemase C-terminal domain-like"/>
    <property type="match status" value="1"/>
</dbReference>
<dbReference type="SUPFAM" id="SSF51419">
    <property type="entry name" value="PLP-binding barrel"/>
    <property type="match status" value="1"/>
</dbReference>
<dbReference type="PROSITE" id="PS00395">
    <property type="entry name" value="ALANINE_RACEMASE"/>
    <property type="match status" value="1"/>
</dbReference>
<feature type="chain" id="PRO_0000114570" description="Alanine racemase 1">
    <location>
        <begin position="1"/>
        <end position="382"/>
    </location>
</feature>
<feature type="active site" description="Proton acceptor; specific for D-alanine" evidence="1">
    <location>
        <position position="39"/>
    </location>
</feature>
<feature type="active site" description="Proton acceptor; specific for L-alanine" evidence="1">
    <location>
        <position position="265"/>
    </location>
</feature>
<feature type="binding site" evidence="1">
    <location>
        <position position="138"/>
    </location>
    <ligand>
        <name>substrate</name>
    </ligand>
</feature>
<feature type="binding site" evidence="1">
    <location>
        <position position="312"/>
    </location>
    <ligand>
        <name>substrate</name>
    </ligand>
</feature>
<feature type="modified residue" description="N6-(pyridoxal phosphate)lysine" evidence="1">
    <location>
        <position position="39"/>
    </location>
</feature>
<keyword id="KW-0413">Isomerase</keyword>
<keyword id="KW-0663">Pyridoxal phosphate</keyword>
<evidence type="ECO:0000255" key="1">
    <source>
        <dbReference type="HAMAP-Rule" id="MF_01201"/>
    </source>
</evidence>
<accession>Q6GF03</accession>